<protein>
    <recommendedName>
        <fullName>Phosphatidate cytidylyltransferase</fullName>
        <ecNumber>2.7.7.41</ecNumber>
    </recommendedName>
    <alternativeName>
        <fullName>CDP-DAG synthase</fullName>
    </alternativeName>
    <alternativeName>
        <fullName>CDP-DG synthase</fullName>
    </alternativeName>
    <alternativeName>
        <fullName>CDP-diacylglycerol synthase</fullName>
        <shortName>CDS</shortName>
    </alternativeName>
    <alternativeName>
        <fullName>CDP-diglyceride pyrophosphorylase</fullName>
    </alternativeName>
    <alternativeName>
        <fullName>CDP-diglyceride synthase</fullName>
    </alternativeName>
    <alternativeName>
        <fullName>CTP:phosphatidate cytidylyltransferase</fullName>
    </alternativeName>
</protein>
<accession>P0C102</accession>
<accession>Q57CY2</accession>
<accession>Q59173</accession>
<organism>
    <name type="scientific">Brucella abortus biovar 1 (strain 9-941)</name>
    <dbReference type="NCBI Taxonomy" id="262698"/>
    <lineage>
        <taxon>Bacteria</taxon>
        <taxon>Pseudomonadati</taxon>
        <taxon>Pseudomonadota</taxon>
        <taxon>Alphaproteobacteria</taxon>
        <taxon>Hyphomicrobiales</taxon>
        <taxon>Brucellaceae</taxon>
        <taxon>Brucella/Ochrobactrum group</taxon>
        <taxon>Brucella</taxon>
    </lineage>
</organism>
<keyword id="KW-0997">Cell inner membrane</keyword>
<keyword id="KW-1003">Cell membrane</keyword>
<keyword id="KW-0444">Lipid biosynthesis</keyword>
<keyword id="KW-0443">Lipid metabolism</keyword>
<keyword id="KW-0472">Membrane</keyword>
<keyword id="KW-0548">Nucleotidyltransferase</keyword>
<keyword id="KW-0594">Phospholipid biosynthesis</keyword>
<keyword id="KW-1208">Phospholipid metabolism</keyword>
<keyword id="KW-0808">Transferase</keyword>
<keyword id="KW-0812">Transmembrane</keyword>
<keyword id="KW-1133">Transmembrane helix</keyword>
<dbReference type="EC" id="2.7.7.41"/>
<dbReference type="EMBL" id="AE017223">
    <property type="protein sequence ID" value="AAX74502.1"/>
    <property type="molecule type" value="Genomic_DNA"/>
</dbReference>
<dbReference type="RefSeq" id="WP_002964284.1">
    <property type="nucleotide sequence ID" value="NC_006932.1"/>
</dbReference>
<dbReference type="SMR" id="P0C102"/>
<dbReference type="EnsemblBacteria" id="AAX74502">
    <property type="protein sequence ID" value="AAX74502"/>
    <property type="gene ID" value="BruAb1_1163"/>
</dbReference>
<dbReference type="KEGG" id="bmb:BruAb1_1163"/>
<dbReference type="HOGENOM" id="CLU_037294_1_1_5"/>
<dbReference type="UniPathway" id="UPA00557">
    <property type="reaction ID" value="UER00614"/>
</dbReference>
<dbReference type="Proteomes" id="UP000000540">
    <property type="component" value="Chromosome I"/>
</dbReference>
<dbReference type="GO" id="GO:0005886">
    <property type="term" value="C:plasma membrane"/>
    <property type="evidence" value="ECO:0007669"/>
    <property type="project" value="UniProtKB-SubCell"/>
</dbReference>
<dbReference type="GO" id="GO:0004605">
    <property type="term" value="F:phosphatidate cytidylyltransferase activity"/>
    <property type="evidence" value="ECO:0007669"/>
    <property type="project" value="UniProtKB-EC"/>
</dbReference>
<dbReference type="GO" id="GO:0016024">
    <property type="term" value="P:CDP-diacylglycerol biosynthetic process"/>
    <property type="evidence" value="ECO:0007669"/>
    <property type="project" value="UniProtKB-UniPathway"/>
</dbReference>
<dbReference type="InterPro" id="IPR000374">
    <property type="entry name" value="PC_trans"/>
</dbReference>
<dbReference type="PANTHER" id="PTHR46382">
    <property type="entry name" value="PHOSPHATIDATE CYTIDYLYLTRANSFERASE"/>
    <property type="match status" value="1"/>
</dbReference>
<dbReference type="PANTHER" id="PTHR46382:SF1">
    <property type="entry name" value="PHOSPHATIDATE CYTIDYLYLTRANSFERASE"/>
    <property type="match status" value="1"/>
</dbReference>
<dbReference type="Pfam" id="PF01148">
    <property type="entry name" value="CTP_transf_1"/>
    <property type="match status" value="1"/>
</dbReference>
<dbReference type="PROSITE" id="PS01315">
    <property type="entry name" value="CDS"/>
    <property type="match status" value="1"/>
</dbReference>
<gene>
    <name type="primary">cdsA</name>
    <name type="ordered locus">BruAb1_1163</name>
</gene>
<sequence length="270" mass="28448">MSNLQTRIITAIVLGTITLWLTWVGGVGFTLFSIAIGLAMFYEWTELSATRQTAFSRLFGWAWLIVTGILLILDRGALLTIGFLVAGCAILLVTQWKSGRGWPAAGLFYAGFSALSLSLLRGDEPFGFTTIVFLFAVVWSTDITAYFNGRALGGPKLAPRFSPNKTWSGAIGGAAAAVAGGLLVASLVAAPGGWGVPVLALLLSIVSQIGDLAESWVKRQFGAKDSGRLLPGHGGVLDRVDGLVAAAALLYLFGAIFAEPDVLSAIFFSF</sequence>
<proteinExistence type="inferred from homology"/>
<feature type="chain" id="PRO_0000090727" description="Phosphatidate cytidylyltransferase">
    <location>
        <begin position="1"/>
        <end position="270"/>
    </location>
</feature>
<feature type="transmembrane region" description="Helical" evidence="2">
    <location>
        <begin position="19"/>
        <end position="39"/>
    </location>
</feature>
<feature type="transmembrane region" description="Helical" evidence="2">
    <location>
        <begin position="53"/>
        <end position="73"/>
    </location>
</feature>
<feature type="transmembrane region" description="Helical" evidence="2">
    <location>
        <begin position="76"/>
        <end position="96"/>
    </location>
</feature>
<feature type="transmembrane region" description="Helical" evidence="2">
    <location>
        <begin position="101"/>
        <end position="121"/>
    </location>
</feature>
<feature type="transmembrane region" description="Helical" evidence="2">
    <location>
        <begin position="126"/>
        <end position="146"/>
    </location>
</feature>
<feature type="transmembrane region" description="Helical" evidence="2">
    <location>
        <begin position="183"/>
        <end position="203"/>
    </location>
</feature>
<feature type="transmembrane region" description="Helical" evidence="2">
    <location>
        <begin position="248"/>
        <end position="268"/>
    </location>
</feature>
<reference key="1">
    <citation type="journal article" date="2005" name="J. Bacteriol.">
        <title>Completion of the genome sequence of Brucella abortus and comparison to the highly similar genomes of Brucella melitensis and Brucella suis.</title>
        <authorList>
            <person name="Halling S.M."/>
            <person name="Peterson-Burch B.D."/>
            <person name="Bricker B.J."/>
            <person name="Zuerner R.L."/>
            <person name="Qing Z."/>
            <person name="Li L.-L."/>
            <person name="Kapur V."/>
            <person name="Alt D.P."/>
            <person name="Olsen S.C."/>
        </authorList>
    </citation>
    <scope>NUCLEOTIDE SEQUENCE [LARGE SCALE GENOMIC DNA]</scope>
    <source>
        <strain>9-941</strain>
    </source>
</reference>
<evidence type="ECO:0000250" key="1"/>
<evidence type="ECO:0000255" key="2"/>
<evidence type="ECO:0000305" key="3"/>
<comment type="catalytic activity">
    <reaction>
        <text>a 1,2-diacyl-sn-glycero-3-phosphate + CTP + H(+) = a CDP-1,2-diacyl-sn-glycerol + diphosphate</text>
        <dbReference type="Rhea" id="RHEA:16229"/>
        <dbReference type="ChEBI" id="CHEBI:15378"/>
        <dbReference type="ChEBI" id="CHEBI:33019"/>
        <dbReference type="ChEBI" id="CHEBI:37563"/>
        <dbReference type="ChEBI" id="CHEBI:58332"/>
        <dbReference type="ChEBI" id="CHEBI:58608"/>
        <dbReference type="EC" id="2.7.7.41"/>
    </reaction>
</comment>
<comment type="pathway">
    <text>Phospholipid metabolism; CDP-diacylglycerol biosynthesis; CDP-diacylglycerol from sn-glycerol 3-phosphate: step 3/3.</text>
</comment>
<comment type="subcellular location">
    <subcellularLocation>
        <location evidence="1">Cell inner membrane</location>
        <topology evidence="1">Multi-pass membrane protein</topology>
    </subcellularLocation>
</comment>
<comment type="similarity">
    <text evidence="3">Belongs to the CDS family.</text>
</comment>
<name>CDSA_BRUAB</name>